<reference key="1">
    <citation type="journal article" date="2006" name="Appl. Environ. Microbiol.">
        <title>Complete genome sequence of the marine, chemolithoautotrophic, ammonia-oxidizing bacterium Nitrosococcus oceani ATCC 19707.</title>
        <authorList>
            <person name="Klotz M.G."/>
            <person name="Arp D.J."/>
            <person name="Chain P.S.G."/>
            <person name="El-Sheikh A.F."/>
            <person name="Hauser L.J."/>
            <person name="Hommes N.G."/>
            <person name="Larimer F.W."/>
            <person name="Malfatti S.A."/>
            <person name="Norton J.M."/>
            <person name="Poret-Peterson A.T."/>
            <person name="Vergez L.M."/>
            <person name="Ward B.B."/>
        </authorList>
    </citation>
    <scope>NUCLEOTIDE SEQUENCE [LARGE SCALE GENOMIC DNA]</scope>
    <source>
        <strain>ATCC 19707 / BCRC 17464 / JCM 30415 / NCIMB 11848 / C-107</strain>
    </source>
</reference>
<proteinExistence type="inferred from homology"/>
<organism>
    <name type="scientific">Nitrosococcus oceani (strain ATCC 19707 / BCRC 17464 / JCM 30415 / NCIMB 11848 / C-107)</name>
    <dbReference type="NCBI Taxonomy" id="323261"/>
    <lineage>
        <taxon>Bacteria</taxon>
        <taxon>Pseudomonadati</taxon>
        <taxon>Pseudomonadota</taxon>
        <taxon>Gammaproteobacteria</taxon>
        <taxon>Chromatiales</taxon>
        <taxon>Chromatiaceae</taxon>
        <taxon>Nitrosococcus</taxon>
    </lineage>
</organism>
<feature type="chain" id="PRO_0000236129" description="DNA replication and repair protein RecF">
    <location>
        <begin position="1"/>
        <end position="363"/>
    </location>
</feature>
<feature type="binding site" evidence="1">
    <location>
        <begin position="31"/>
        <end position="38"/>
    </location>
    <ligand>
        <name>ATP</name>
        <dbReference type="ChEBI" id="CHEBI:30616"/>
    </ligand>
</feature>
<accession>Q3JF36</accession>
<name>RECF_NITOC</name>
<keyword id="KW-0067">ATP-binding</keyword>
<keyword id="KW-0963">Cytoplasm</keyword>
<keyword id="KW-0227">DNA damage</keyword>
<keyword id="KW-0234">DNA repair</keyword>
<keyword id="KW-0235">DNA replication</keyword>
<keyword id="KW-0238">DNA-binding</keyword>
<keyword id="KW-0547">Nucleotide-binding</keyword>
<keyword id="KW-1185">Reference proteome</keyword>
<keyword id="KW-0742">SOS response</keyword>
<evidence type="ECO:0000255" key="1">
    <source>
        <dbReference type="HAMAP-Rule" id="MF_00365"/>
    </source>
</evidence>
<dbReference type="EMBL" id="CP000127">
    <property type="protein sequence ID" value="ABA56560.1"/>
    <property type="molecule type" value="Genomic_DNA"/>
</dbReference>
<dbReference type="SMR" id="Q3JF36"/>
<dbReference type="FunCoup" id="Q3JF36">
    <property type="interactions" value="204"/>
</dbReference>
<dbReference type="STRING" id="323261.Noc_0018"/>
<dbReference type="KEGG" id="noc:Noc_0018"/>
<dbReference type="eggNOG" id="COG1195">
    <property type="taxonomic scope" value="Bacteria"/>
</dbReference>
<dbReference type="HOGENOM" id="CLU_040267_0_0_6"/>
<dbReference type="InParanoid" id="Q3JF36"/>
<dbReference type="Proteomes" id="UP000006838">
    <property type="component" value="Chromosome"/>
</dbReference>
<dbReference type="GO" id="GO:0005737">
    <property type="term" value="C:cytoplasm"/>
    <property type="evidence" value="ECO:0007669"/>
    <property type="project" value="UniProtKB-SubCell"/>
</dbReference>
<dbReference type="GO" id="GO:0005524">
    <property type="term" value="F:ATP binding"/>
    <property type="evidence" value="ECO:0007669"/>
    <property type="project" value="UniProtKB-UniRule"/>
</dbReference>
<dbReference type="GO" id="GO:0003697">
    <property type="term" value="F:single-stranded DNA binding"/>
    <property type="evidence" value="ECO:0007669"/>
    <property type="project" value="UniProtKB-UniRule"/>
</dbReference>
<dbReference type="GO" id="GO:0006260">
    <property type="term" value="P:DNA replication"/>
    <property type="evidence" value="ECO:0007669"/>
    <property type="project" value="UniProtKB-UniRule"/>
</dbReference>
<dbReference type="GO" id="GO:0000731">
    <property type="term" value="P:DNA synthesis involved in DNA repair"/>
    <property type="evidence" value="ECO:0007669"/>
    <property type="project" value="TreeGrafter"/>
</dbReference>
<dbReference type="GO" id="GO:0006302">
    <property type="term" value="P:double-strand break repair"/>
    <property type="evidence" value="ECO:0007669"/>
    <property type="project" value="TreeGrafter"/>
</dbReference>
<dbReference type="GO" id="GO:0009432">
    <property type="term" value="P:SOS response"/>
    <property type="evidence" value="ECO:0007669"/>
    <property type="project" value="UniProtKB-UniRule"/>
</dbReference>
<dbReference type="Gene3D" id="3.40.50.300">
    <property type="entry name" value="P-loop containing nucleotide triphosphate hydrolases"/>
    <property type="match status" value="1"/>
</dbReference>
<dbReference type="Gene3D" id="1.20.1050.90">
    <property type="entry name" value="RecF/RecN/SMC, N-terminal domain"/>
    <property type="match status" value="1"/>
</dbReference>
<dbReference type="HAMAP" id="MF_00365">
    <property type="entry name" value="RecF"/>
    <property type="match status" value="1"/>
</dbReference>
<dbReference type="InterPro" id="IPR001238">
    <property type="entry name" value="DNA-binding_RecF"/>
</dbReference>
<dbReference type="InterPro" id="IPR018078">
    <property type="entry name" value="DNA-binding_RecF_CS"/>
</dbReference>
<dbReference type="InterPro" id="IPR027417">
    <property type="entry name" value="P-loop_NTPase"/>
</dbReference>
<dbReference type="InterPro" id="IPR003395">
    <property type="entry name" value="RecF/RecN/SMC_N"/>
</dbReference>
<dbReference type="InterPro" id="IPR042174">
    <property type="entry name" value="RecF_2"/>
</dbReference>
<dbReference type="NCBIfam" id="TIGR00611">
    <property type="entry name" value="recf"/>
    <property type="match status" value="1"/>
</dbReference>
<dbReference type="PANTHER" id="PTHR32182">
    <property type="entry name" value="DNA REPLICATION AND REPAIR PROTEIN RECF"/>
    <property type="match status" value="1"/>
</dbReference>
<dbReference type="PANTHER" id="PTHR32182:SF0">
    <property type="entry name" value="DNA REPLICATION AND REPAIR PROTEIN RECF"/>
    <property type="match status" value="1"/>
</dbReference>
<dbReference type="Pfam" id="PF02463">
    <property type="entry name" value="SMC_N"/>
    <property type="match status" value="1"/>
</dbReference>
<dbReference type="SUPFAM" id="SSF52540">
    <property type="entry name" value="P-loop containing nucleoside triphosphate hydrolases"/>
    <property type="match status" value="1"/>
</dbReference>
<dbReference type="PROSITE" id="PS00618">
    <property type="entry name" value="RECF_2"/>
    <property type="match status" value="1"/>
</dbReference>
<sequence>MMHITHLDIRNFRNLKHIELHPSKGVNILSGANSSGKTSFLEAIYLLGLGRSFRTVQLISAIQAGMESLRVVAKVKQVGGSHTAGVEFGPAGFRARINKDTVKKRSQLATQLPLLYMSSYSHVVLDGGPRYRRQWLDWSLFHLEPGFHDLWWCYQRTLKQRNHVLRVHKPSWQQEINAWNKKLSTYGEQITSLREAILFKLQDSVSQLFTALAHQPISPVTMEFKQGWARTVRLEEILNESLNYDRAAGYTRYGPHRAEVAFYVDGKDVREILSRGQQKVFCYSLALSQANLLYRTKEQNCIFLIDDFTSELDADHRKRLLTLLNKLGMQVFATTIESLGSEIKAHPNIKEFHVKLGQVEEMV</sequence>
<comment type="function">
    <text evidence="1">The RecF protein is involved in DNA metabolism; it is required for DNA replication and normal SOS inducibility. RecF binds preferentially to single-stranded, linear DNA. It also seems to bind ATP.</text>
</comment>
<comment type="subcellular location">
    <subcellularLocation>
        <location evidence="1">Cytoplasm</location>
    </subcellularLocation>
</comment>
<comment type="similarity">
    <text evidence="1">Belongs to the RecF family.</text>
</comment>
<protein>
    <recommendedName>
        <fullName evidence="1">DNA replication and repair protein RecF</fullName>
    </recommendedName>
</protein>
<gene>
    <name evidence="1" type="primary">recF</name>
    <name type="ordered locus">Noc_0018</name>
</gene>